<protein>
    <recommendedName>
        <fullName evidence="1">tRNA N6-adenosine threonylcarbamoyltransferase</fullName>
        <ecNumber evidence="1">2.3.1.234</ecNumber>
    </recommendedName>
    <alternativeName>
        <fullName evidence="1">N6-L-threonylcarbamoyladenine synthase</fullName>
        <shortName evidence="1">t(6)A synthase</shortName>
    </alternativeName>
    <alternativeName>
        <fullName evidence="1">t(6)A37 threonylcarbamoyladenosine biosynthesis protein TsaD</fullName>
    </alternativeName>
    <alternativeName>
        <fullName evidence="1">tRNA threonylcarbamoyladenosine biosynthesis protein TsaD</fullName>
    </alternativeName>
</protein>
<comment type="function">
    <text evidence="1">Required for the formation of a threonylcarbamoyl group on adenosine at position 37 (t(6)A37) in tRNAs that read codons beginning with adenine. Is involved in the transfer of the threonylcarbamoyl moiety of threonylcarbamoyl-AMP (TC-AMP) to the N6 group of A37, together with TsaE and TsaB. TsaD likely plays a direct catalytic role in this reaction.</text>
</comment>
<comment type="catalytic activity">
    <reaction evidence="1">
        <text>L-threonylcarbamoyladenylate + adenosine(37) in tRNA = N(6)-L-threonylcarbamoyladenosine(37) in tRNA + AMP + H(+)</text>
        <dbReference type="Rhea" id="RHEA:37059"/>
        <dbReference type="Rhea" id="RHEA-COMP:10162"/>
        <dbReference type="Rhea" id="RHEA-COMP:10163"/>
        <dbReference type="ChEBI" id="CHEBI:15378"/>
        <dbReference type="ChEBI" id="CHEBI:73682"/>
        <dbReference type="ChEBI" id="CHEBI:74411"/>
        <dbReference type="ChEBI" id="CHEBI:74418"/>
        <dbReference type="ChEBI" id="CHEBI:456215"/>
        <dbReference type="EC" id="2.3.1.234"/>
    </reaction>
</comment>
<comment type="cofactor">
    <cofactor evidence="1">
        <name>Fe(2+)</name>
        <dbReference type="ChEBI" id="CHEBI:29033"/>
    </cofactor>
    <text evidence="1">Binds 1 Fe(2+) ion per subunit.</text>
</comment>
<comment type="subcellular location">
    <subcellularLocation>
        <location evidence="1">Cytoplasm</location>
    </subcellularLocation>
</comment>
<comment type="similarity">
    <text evidence="1">Belongs to the KAE1 / TsaD family.</text>
</comment>
<comment type="sequence caution" evidence="2">
    <conflict type="erroneous initiation">
        <sequence resource="EMBL-CDS" id="ABM57102"/>
    </conflict>
</comment>
<proteinExistence type="inferred from homology"/>
<accession>A1WHJ5</accession>
<gene>
    <name evidence="1" type="primary">tsaD</name>
    <name type="synonym">gcp</name>
    <name type="ordered locus">Veis_1335</name>
</gene>
<name>TSAD_VEREI</name>
<dbReference type="EC" id="2.3.1.234" evidence="1"/>
<dbReference type="EMBL" id="CP000542">
    <property type="protein sequence ID" value="ABM57102.1"/>
    <property type="status" value="ALT_INIT"/>
    <property type="molecule type" value="Genomic_DNA"/>
</dbReference>
<dbReference type="RefSeq" id="WP_041949853.1">
    <property type="nucleotide sequence ID" value="NC_008786.1"/>
</dbReference>
<dbReference type="SMR" id="A1WHJ5"/>
<dbReference type="STRING" id="391735.Veis_1335"/>
<dbReference type="GeneID" id="76459978"/>
<dbReference type="KEGG" id="vei:Veis_1335"/>
<dbReference type="eggNOG" id="COG0533">
    <property type="taxonomic scope" value="Bacteria"/>
</dbReference>
<dbReference type="HOGENOM" id="CLU_023208_0_2_4"/>
<dbReference type="OrthoDB" id="9806197at2"/>
<dbReference type="Proteomes" id="UP000000374">
    <property type="component" value="Chromosome"/>
</dbReference>
<dbReference type="GO" id="GO:0005737">
    <property type="term" value="C:cytoplasm"/>
    <property type="evidence" value="ECO:0007669"/>
    <property type="project" value="UniProtKB-SubCell"/>
</dbReference>
<dbReference type="GO" id="GO:0005506">
    <property type="term" value="F:iron ion binding"/>
    <property type="evidence" value="ECO:0007669"/>
    <property type="project" value="UniProtKB-UniRule"/>
</dbReference>
<dbReference type="GO" id="GO:0061711">
    <property type="term" value="F:N(6)-L-threonylcarbamoyladenine synthase activity"/>
    <property type="evidence" value="ECO:0007669"/>
    <property type="project" value="UniProtKB-EC"/>
</dbReference>
<dbReference type="GO" id="GO:0002949">
    <property type="term" value="P:tRNA threonylcarbamoyladenosine modification"/>
    <property type="evidence" value="ECO:0007669"/>
    <property type="project" value="UniProtKB-UniRule"/>
</dbReference>
<dbReference type="CDD" id="cd24133">
    <property type="entry name" value="ASKHA_NBD_TsaD_bac"/>
    <property type="match status" value="1"/>
</dbReference>
<dbReference type="FunFam" id="3.30.420.40:FF:000012">
    <property type="entry name" value="tRNA N6-adenosine threonylcarbamoyltransferase"/>
    <property type="match status" value="1"/>
</dbReference>
<dbReference type="FunFam" id="3.30.420.40:FF:000040">
    <property type="entry name" value="tRNA N6-adenosine threonylcarbamoyltransferase"/>
    <property type="match status" value="1"/>
</dbReference>
<dbReference type="Gene3D" id="3.30.420.40">
    <property type="match status" value="2"/>
</dbReference>
<dbReference type="HAMAP" id="MF_01445">
    <property type="entry name" value="TsaD"/>
    <property type="match status" value="1"/>
</dbReference>
<dbReference type="InterPro" id="IPR043129">
    <property type="entry name" value="ATPase_NBD"/>
</dbReference>
<dbReference type="InterPro" id="IPR000905">
    <property type="entry name" value="Gcp-like_dom"/>
</dbReference>
<dbReference type="InterPro" id="IPR017861">
    <property type="entry name" value="KAE1/TsaD"/>
</dbReference>
<dbReference type="InterPro" id="IPR017860">
    <property type="entry name" value="Peptidase_M22_CS"/>
</dbReference>
<dbReference type="InterPro" id="IPR022450">
    <property type="entry name" value="TsaD"/>
</dbReference>
<dbReference type="NCBIfam" id="TIGR00329">
    <property type="entry name" value="gcp_kae1"/>
    <property type="match status" value="1"/>
</dbReference>
<dbReference type="NCBIfam" id="TIGR03723">
    <property type="entry name" value="T6A_TsaD_YgjD"/>
    <property type="match status" value="1"/>
</dbReference>
<dbReference type="PANTHER" id="PTHR11735">
    <property type="entry name" value="TRNA N6-ADENOSINE THREONYLCARBAMOYLTRANSFERASE"/>
    <property type="match status" value="1"/>
</dbReference>
<dbReference type="PANTHER" id="PTHR11735:SF6">
    <property type="entry name" value="TRNA N6-ADENOSINE THREONYLCARBAMOYLTRANSFERASE, MITOCHONDRIAL"/>
    <property type="match status" value="1"/>
</dbReference>
<dbReference type="Pfam" id="PF00814">
    <property type="entry name" value="TsaD"/>
    <property type="match status" value="1"/>
</dbReference>
<dbReference type="PRINTS" id="PR00789">
    <property type="entry name" value="OSIALOPTASE"/>
</dbReference>
<dbReference type="SUPFAM" id="SSF53067">
    <property type="entry name" value="Actin-like ATPase domain"/>
    <property type="match status" value="2"/>
</dbReference>
<dbReference type="PROSITE" id="PS01016">
    <property type="entry name" value="GLYCOPROTEASE"/>
    <property type="match status" value="1"/>
</dbReference>
<keyword id="KW-0012">Acyltransferase</keyword>
<keyword id="KW-0963">Cytoplasm</keyword>
<keyword id="KW-0408">Iron</keyword>
<keyword id="KW-0479">Metal-binding</keyword>
<keyword id="KW-1185">Reference proteome</keyword>
<keyword id="KW-0808">Transferase</keyword>
<keyword id="KW-0819">tRNA processing</keyword>
<feature type="chain" id="PRO_0000303606" description="tRNA N6-adenosine threonylcarbamoyltransferase">
    <location>
        <begin position="1"/>
        <end position="345"/>
    </location>
</feature>
<feature type="binding site" evidence="1">
    <location>
        <position position="117"/>
    </location>
    <ligand>
        <name>Fe cation</name>
        <dbReference type="ChEBI" id="CHEBI:24875"/>
    </ligand>
</feature>
<feature type="binding site" evidence="1">
    <location>
        <position position="121"/>
    </location>
    <ligand>
        <name>Fe cation</name>
        <dbReference type="ChEBI" id="CHEBI:24875"/>
    </ligand>
</feature>
<feature type="binding site" evidence="1">
    <location>
        <begin position="140"/>
        <end position="144"/>
    </location>
    <ligand>
        <name>substrate</name>
    </ligand>
</feature>
<feature type="binding site" evidence="1">
    <location>
        <position position="173"/>
    </location>
    <ligand>
        <name>substrate</name>
    </ligand>
</feature>
<feature type="binding site" evidence="1">
    <location>
        <position position="186"/>
    </location>
    <ligand>
        <name>substrate</name>
    </ligand>
</feature>
<feature type="binding site" evidence="1">
    <location>
        <position position="279"/>
    </location>
    <ligand>
        <name>substrate</name>
    </ligand>
</feature>
<feature type="binding site" evidence="1">
    <location>
        <position position="307"/>
    </location>
    <ligand>
        <name>Fe cation</name>
        <dbReference type="ChEBI" id="CHEBI:24875"/>
    </ligand>
</feature>
<evidence type="ECO:0000255" key="1">
    <source>
        <dbReference type="HAMAP-Rule" id="MF_01445"/>
    </source>
</evidence>
<evidence type="ECO:0000305" key="2"/>
<organism>
    <name type="scientific">Verminephrobacter eiseniae (strain EF01-2)</name>
    <dbReference type="NCBI Taxonomy" id="391735"/>
    <lineage>
        <taxon>Bacteria</taxon>
        <taxon>Pseudomonadati</taxon>
        <taxon>Pseudomonadota</taxon>
        <taxon>Betaproteobacteria</taxon>
        <taxon>Burkholderiales</taxon>
        <taxon>Comamonadaceae</taxon>
        <taxon>Verminephrobacter</taxon>
    </lineage>
</organism>
<reference key="1">
    <citation type="submission" date="2006-12" db="EMBL/GenBank/DDBJ databases">
        <title>Complete sequence of chromosome 1 of Verminephrobacter eiseniae EF01-2.</title>
        <authorList>
            <person name="Copeland A."/>
            <person name="Lucas S."/>
            <person name="Lapidus A."/>
            <person name="Barry K."/>
            <person name="Detter J.C."/>
            <person name="Glavina del Rio T."/>
            <person name="Dalin E."/>
            <person name="Tice H."/>
            <person name="Pitluck S."/>
            <person name="Chertkov O."/>
            <person name="Brettin T."/>
            <person name="Bruce D."/>
            <person name="Han C."/>
            <person name="Tapia R."/>
            <person name="Gilna P."/>
            <person name="Schmutz J."/>
            <person name="Larimer F."/>
            <person name="Land M."/>
            <person name="Hauser L."/>
            <person name="Kyrpides N."/>
            <person name="Kim E."/>
            <person name="Stahl D."/>
            <person name="Richardson P."/>
        </authorList>
    </citation>
    <scope>NUCLEOTIDE SEQUENCE [LARGE SCALE GENOMIC DNA]</scope>
    <source>
        <strain>EF01-2</strain>
    </source>
</reference>
<sequence>MGLLILGIESSCDETGVALVRSIGAARPRLLAHALHSQVQMHQAYGGVVPELASRDHIRRVLPLTTQVLRASGQRLADVDVLAYTRGPGLAGALLVGAGLACALAAALGKPVLGVHHLEGHLLSPFLSADPPEFPFVALLVSGGHTQLMRVDGVGRYALLGETIDDAAGEAFDKSAKLMGLGYPGGPALARLAEQGSATAFGLPRPLLHSGDLDFSFAGLKTAVLTQVRKLGDQLPARKADLAASTEAAIVQVLVKKTLAALRQTGLRRIVVAGGVGANRRLRQQLDAACADSGLRVHYPELALCTDNGAMIALAAAMRLQAGVQQAGTDYAFDVLPRWPLAASA</sequence>